<organism>
    <name type="scientific">Chlorobium limicola (strain DSM 245 / NBRC 103803 / 6330)</name>
    <dbReference type="NCBI Taxonomy" id="290315"/>
    <lineage>
        <taxon>Bacteria</taxon>
        <taxon>Pseudomonadati</taxon>
        <taxon>Chlorobiota</taxon>
        <taxon>Chlorobiia</taxon>
        <taxon>Chlorobiales</taxon>
        <taxon>Chlorobiaceae</taxon>
        <taxon>Chlorobium/Pelodictyon group</taxon>
        <taxon>Chlorobium</taxon>
    </lineage>
</organism>
<accession>B3EDY2</accession>
<reference key="1">
    <citation type="submission" date="2008-05" db="EMBL/GenBank/DDBJ databases">
        <title>Complete sequence of Chlorobium limicola DSM 245.</title>
        <authorList>
            <consortium name="US DOE Joint Genome Institute"/>
            <person name="Lucas S."/>
            <person name="Copeland A."/>
            <person name="Lapidus A."/>
            <person name="Glavina del Rio T."/>
            <person name="Dalin E."/>
            <person name="Tice H."/>
            <person name="Bruce D."/>
            <person name="Goodwin L."/>
            <person name="Pitluck S."/>
            <person name="Schmutz J."/>
            <person name="Larimer F."/>
            <person name="Land M."/>
            <person name="Hauser L."/>
            <person name="Kyrpides N."/>
            <person name="Ovchinnikova G."/>
            <person name="Zhao F."/>
            <person name="Li T."/>
            <person name="Liu Z."/>
            <person name="Overmann J."/>
            <person name="Bryant D.A."/>
            <person name="Richardson P."/>
        </authorList>
    </citation>
    <scope>NUCLEOTIDE SEQUENCE [LARGE SCALE GENOMIC DNA]</scope>
    <source>
        <strain>DSM 245 / NBRC 103803 / 6330</strain>
    </source>
</reference>
<sequence>MSQSRYFFTSESVSEGHPDKVSDQISDAVLDEFLRQDPNSRVACETFVTTGQVIVGGEVTTKGIVDIQKIARRVVTEIGYTKGEYMFEANSCGVLSALHSQSPDINRGVDRKEEIADEFDRVGAGDQGMMFGYACTETPELMPAAIQFAQQLVKKLAEIRKEGKIMTYLRPDAKSQVTLEYIDDKVARVDAVVVSTQHDPEPAGMSEADFQAVIRKDIIENVVKVVIPAELLDENTKFHINPTGRFEIGGPHGDTGLTGRKIIVDTYGGAAPHGGGAFSGKDPSKVDRSAAYASRHVAKNIVAADLADKCTVQVSYAIGVARPVSIYIDTHGTAKHGLDDAEIQAKAEKIFDLRPAAIIRRFNLDRPHGWCYQDTAAYGHFGRDIFPWEKTDKVEELKKAFNLA</sequence>
<comment type="function">
    <text evidence="1">Catalyzes the formation of S-adenosylmethionine (AdoMet) from methionine and ATP. The overall synthetic reaction is composed of two sequential steps, AdoMet formation and the subsequent tripolyphosphate hydrolysis which occurs prior to release of AdoMet from the enzyme.</text>
</comment>
<comment type="catalytic activity">
    <reaction evidence="1">
        <text>L-methionine + ATP + H2O = S-adenosyl-L-methionine + phosphate + diphosphate</text>
        <dbReference type="Rhea" id="RHEA:21080"/>
        <dbReference type="ChEBI" id="CHEBI:15377"/>
        <dbReference type="ChEBI" id="CHEBI:30616"/>
        <dbReference type="ChEBI" id="CHEBI:33019"/>
        <dbReference type="ChEBI" id="CHEBI:43474"/>
        <dbReference type="ChEBI" id="CHEBI:57844"/>
        <dbReference type="ChEBI" id="CHEBI:59789"/>
        <dbReference type="EC" id="2.5.1.6"/>
    </reaction>
</comment>
<comment type="cofactor">
    <cofactor evidence="1">
        <name>Mg(2+)</name>
        <dbReference type="ChEBI" id="CHEBI:18420"/>
    </cofactor>
    <text evidence="1">Binds 2 divalent ions per subunit.</text>
</comment>
<comment type="cofactor">
    <cofactor evidence="1">
        <name>K(+)</name>
        <dbReference type="ChEBI" id="CHEBI:29103"/>
    </cofactor>
    <text evidence="1">Binds 1 potassium ion per subunit.</text>
</comment>
<comment type="pathway">
    <text evidence="1">Amino-acid biosynthesis; S-adenosyl-L-methionine biosynthesis; S-adenosyl-L-methionine from L-methionine: step 1/1.</text>
</comment>
<comment type="subunit">
    <text evidence="1">Homotetramer; dimer of dimers.</text>
</comment>
<comment type="subcellular location">
    <subcellularLocation>
        <location evidence="1">Cytoplasm</location>
    </subcellularLocation>
</comment>
<comment type="similarity">
    <text evidence="1">Belongs to the AdoMet synthase family.</text>
</comment>
<protein>
    <recommendedName>
        <fullName evidence="1">S-adenosylmethionine synthase</fullName>
        <shortName evidence="1">AdoMet synthase</shortName>
        <ecNumber evidence="1">2.5.1.6</ecNumber>
    </recommendedName>
    <alternativeName>
        <fullName evidence="1">MAT</fullName>
    </alternativeName>
    <alternativeName>
        <fullName evidence="1">Methionine adenosyltransferase</fullName>
    </alternativeName>
</protein>
<feature type="chain" id="PRO_1000093034" description="S-adenosylmethionine synthase">
    <location>
        <begin position="1"/>
        <end position="404"/>
    </location>
</feature>
<feature type="region of interest" description="Disordered" evidence="2">
    <location>
        <begin position="1"/>
        <end position="20"/>
    </location>
</feature>
<feature type="region of interest" description="Flexible loop" evidence="1">
    <location>
        <begin position="101"/>
        <end position="111"/>
    </location>
</feature>
<feature type="compositionally biased region" description="Polar residues" evidence="2">
    <location>
        <begin position="1"/>
        <end position="13"/>
    </location>
</feature>
<feature type="binding site" description="in other chain" evidence="1">
    <location>
        <position position="17"/>
    </location>
    <ligand>
        <name>ATP</name>
        <dbReference type="ChEBI" id="CHEBI:30616"/>
        <note>ligand shared between two neighboring subunits</note>
    </ligand>
</feature>
<feature type="binding site" evidence="1">
    <location>
        <position position="19"/>
    </location>
    <ligand>
        <name>Mg(2+)</name>
        <dbReference type="ChEBI" id="CHEBI:18420"/>
    </ligand>
</feature>
<feature type="binding site" evidence="1">
    <location>
        <position position="45"/>
    </location>
    <ligand>
        <name>K(+)</name>
        <dbReference type="ChEBI" id="CHEBI:29103"/>
    </ligand>
</feature>
<feature type="binding site" description="in other chain" evidence="1">
    <location>
        <position position="58"/>
    </location>
    <ligand>
        <name>L-methionine</name>
        <dbReference type="ChEBI" id="CHEBI:57844"/>
        <note>ligand shared between two neighboring subunits</note>
    </ligand>
</feature>
<feature type="binding site" description="in other chain" evidence="1">
    <location>
        <position position="101"/>
    </location>
    <ligand>
        <name>L-methionine</name>
        <dbReference type="ChEBI" id="CHEBI:57844"/>
        <note>ligand shared between two neighboring subunits</note>
    </ligand>
</feature>
<feature type="binding site" description="in other chain" evidence="1">
    <location>
        <begin position="172"/>
        <end position="174"/>
    </location>
    <ligand>
        <name>ATP</name>
        <dbReference type="ChEBI" id="CHEBI:30616"/>
        <note>ligand shared between two neighboring subunits</note>
    </ligand>
</feature>
<feature type="binding site" description="in other chain" evidence="1">
    <location>
        <begin position="245"/>
        <end position="246"/>
    </location>
    <ligand>
        <name>ATP</name>
        <dbReference type="ChEBI" id="CHEBI:30616"/>
        <note>ligand shared between two neighboring subunits</note>
    </ligand>
</feature>
<feature type="binding site" evidence="1">
    <location>
        <position position="254"/>
    </location>
    <ligand>
        <name>ATP</name>
        <dbReference type="ChEBI" id="CHEBI:30616"/>
        <note>ligand shared between two neighboring subunits</note>
    </ligand>
</feature>
<feature type="binding site" evidence="1">
    <location>
        <position position="254"/>
    </location>
    <ligand>
        <name>L-methionine</name>
        <dbReference type="ChEBI" id="CHEBI:57844"/>
        <note>ligand shared between two neighboring subunits</note>
    </ligand>
</feature>
<feature type="binding site" description="in other chain" evidence="1">
    <location>
        <begin position="260"/>
        <end position="261"/>
    </location>
    <ligand>
        <name>ATP</name>
        <dbReference type="ChEBI" id="CHEBI:30616"/>
        <note>ligand shared between two neighboring subunits</note>
    </ligand>
</feature>
<feature type="binding site" evidence="1">
    <location>
        <position position="277"/>
    </location>
    <ligand>
        <name>ATP</name>
        <dbReference type="ChEBI" id="CHEBI:30616"/>
        <note>ligand shared between two neighboring subunits</note>
    </ligand>
</feature>
<feature type="binding site" evidence="1">
    <location>
        <position position="281"/>
    </location>
    <ligand>
        <name>ATP</name>
        <dbReference type="ChEBI" id="CHEBI:30616"/>
        <note>ligand shared between two neighboring subunits</note>
    </ligand>
</feature>
<feature type="binding site" description="in other chain" evidence="1">
    <location>
        <position position="285"/>
    </location>
    <ligand>
        <name>L-methionine</name>
        <dbReference type="ChEBI" id="CHEBI:57844"/>
        <note>ligand shared between two neighboring subunits</note>
    </ligand>
</feature>
<gene>
    <name evidence="1" type="primary">metK</name>
    <name type="ordered locus">Clim_1641</name>
</gene>
<dbReference type="EC" id="2.5.1.6" evidence="1"/>
<dbReference type="EMBL" id="CP001097">
    <property type="protein sequence ID" value="ACD90684.1"/>
    <property type="molecule type" value="Genomic_DNA"/>
</dbReference>
<dbReference type="RefSeq" id="WP_012466557.1">
    <property type="nucleotide sequence ID" value="NC_010803.1"/>
</dbReference>
<dbReference type="SMR" id="B3EDY2"/>
<dbReference type="STRING" id="290315.Clim_1641"/>
<dbReference type="KEGG" id="cli:Clim_1641"/>
<dbReference type="eggNOG" id="COG0192">
    <property type="taxonomic scope" value="Bacteria"/>
</dbReference>
<dbReference type="HOGENOM" id="CLU_041802_1_1_10"/>
<dbReference type="OrthoDB" id="9801686at2"/>
<dbReference type="UniPathway" id="UPA00315">
    <property type="reaction ID" value="UER00080"/>
</dbReference>
<dbReference type="Proteomes" id="UP000008841">
    <property type="component" value="Chromosome"/>
</dbReference>
<dbReference type="GO" id="GO:0005737">
    <property type="term" value="C:cytoplasm"/>
    <property type="evidence" value="ECO:0007669"/>
    <property type="project" value="UniProtKB-SubCell"/>
</dbReference>
<dbReference type="GO" id="GO:0005524">
    <property type="term" value="F:ATP binding"/>
    <property type="evidence" value="ECO:0007669"/>
    <property type="project" value="UniProtKB-UniRule"/>
</dbReference>
<dbReference type="GO" id="GO:0000287">
    <property type="term" value="F:magnesium ion binding"/>
    <property type="evidence" value="ECO:0007669"/>
    <property type="project" value="UniProtKB-UniRule"/>
</dbReference>
<dbReference type="GO" id="GO:0004478">
    <property type="term" value="F:methionine adenosyltransferase activity"/>
    <property type="evidence" value="ECO:0007669"/>
    <property type="project" value="UniProtKB-UniRule"/>
</dbReference>
<dbReference type="GO" id="GO:0006730">
    <property type="term" value="P:one-carbon metabolic process"/>
    <property type="evidence" value="ECO:0007669"/>
    <property type="project" value="UniProtKB-KW"/>
</dbReference>
<dbReference type="GO" id="GO:0006556">
    <property type="term" value="P:S-adenosylmethionine biosynthetic process"/>
    <property type="evidence" value="ECO:0007669"/>
    <property type="project" value="UniProtKB-UniRule"/>
</dbReference>
<dbReference type="CDD" id="cd18079">
    <property type="entry name" value="S-AdoMet_synt"/>
    <property type="match status" value="1"/>
</dbReference>
<dbReference type="FunFam" id="3.30.300.10:FF:000003">
    <property type="entry name" value="S-adenosylmethionine synthase"/>
    <property type="match status" value="1"/>
</dbReference>
<dbReference type="Gene3D" id="3.30.300.10">
    <property type="match status" value="3"/>
</dbReference>
<dbReference type="HAMAP" id="MF_00086">
    <property type="entry name" value="S_AdoMet_synth1"/>
    <property type="match status" value="1"/>
</dbReference>
<dbReference type="InterPro" id="IPR022631">
    <property type="entry name" value="ADOMET_SYNTHASE_CS"/>
</dbReference>
<dbReference type="InterPro" id="IPR022630">
    <property type="entry name" value="S-AdoMet_synt_C"/>
</dbReference>
<dbReference type="InterPro" id="IPR022629">
    <property type="entry name" value="S-AdoMet_synt_central"/>
</dbReference>
<dbReference type="InterPro" id="IPR022628">
    <property type="entry name" value="S-AdoMet_synt_N"/>
</dbReference>
<dbReference type="InterPro" id="IPR002133">
    <property type="entry name" value="S-AdoMet_synthetase"/>
</dbReference>
<dbReference type="InterPro" id="IPR022636">
    <property type="entry name" value="S-AdoMet_synthetase_sfam"/>
</dbReference>
<dbReference type="NCBIfam" id="TIGR01034">
    <property type="entry name" value="metK"/>
    <property type="match status" value="1"/>
</dbReference>
<dbReference type="PANTHER" id="PTHR11964">
    <property type="entry name" value="S-ADENOSYLMETHIONINE SYNTHETASE"/>
    <property type="match status" value="1"/>
</dbReference>
<dbReference type="Pfam" id="PF02773">
    <property type="entry name" value="S-AdoMet_synt_C"/>
    <property type="match status" value="1"/>
</dbReference>
<dbReference type="Pfam" id="PF02772">
    <property type="entry name" value="S-AdoMet_synt_M"/>
    <property type="match status" value="1"/>
</dbReference>
<dbReference type="Pfam" id="PF00438">
    <property type="entry name" value="S-AdoMet_synt_N"/>
    <property type="match status" value="1"/>
</dbReference>
<dbReference type="PIRSF" id="PIRSF000497">
    <property type="entry name" value="MAT"/>
    <property type="match status" value="1"/>
</dbReference>
<dbReference type="SUPFAM" id="SSF55973">
    <property type="entry name" value="S-adenosylmethionine synthetase"/>
    <property type="match status" value="3"/>
</dbReference>
<dbReference type="PROSITE" id="PS00376">
    <property type="entry name" value="ADOMET_SYNTHASE_1"/>
    <property type="match status" value="1"/>
</dbReference>
<dbReference type="PROSITE" id="PS00377">
    <property type="entry name" value="ADOMET_SYNTHASE_2"/>
    <property type="match status" value="1"/>
</dbReference>
<proteinExistence type="inferred from homology"/>
<keyword id="KW-0067">ATP-binding</keyword>
<keyword id="KW-0963">Cytoplasm</keyword>
<keyword id="KW-0460">Magnesium</keyword>
<keyword id="KW-0479">Metal-binding</keyword>
<keyword id="KW-0547">Nucleotide-binding</keyword>
<keyword id="KW-0554">One-carbon metabolism</keyword>
<keyword id="KW-0630">Potassium</keyword>
<keyword id="KW-0808">Transferase</keyword>
<evidence type="ECO:0000255" key="1">
    <source>
        <dbReference type="HAMAP-Rule" id="MF_00086"/>
    </source>
</evidence>
<evidence type="ECO:0000256" key="2">
    <source>
        <dbReference type="SAM" id="MobiDB-lite"/>
    </source>
</evidence>
<name>METK_CHLL2</name>